<comment type="function">
    <text evidence="1">F(1)F(0) ATP synthase produces ATP from ADP in the presence of a proton or sodium gradient. F-type ATPases consist of two structural domains, F(1) containing the extramembraneous catalytic core and F(0) containing the membrane proton channel, linked together by a central stalk and a peripheral stalk. During catalysis, ATP synthesis in the catalytic domain of F(1) is coupled via a rotary mechanism of the central stalk subunits to proton translocation.</text>
</comment>
<comment type="function">
    <text evidence="1">Component of the F(0) channel, it forms part of the peripheral stalk, linking F(1) to F(0).</text>
</comment>
<comment type="subunit">
    <text evidence="1">F-type ATPases have 2 components, F(1) - the catalytic core - and F(0) - the membrane proton channel. F(1) has five subunits: alpha(3), beta(3), gamma(1), delta(1), epsilon(1). F(0) has three main subunits: a(1), b(2) and c(10-14). The alpha and beta chains form an alternating ring which encloses part of the gamma chain. F(1) is attached to F(0) by a central stalk formed by the gamma and epsilon chains, while a peripheral stalk is formed by the delta and b chains.</text>
</comment>
<comment type="subcellular location">
    <subcellularLocation>
        <location evidence="1">Cell inner membrane</location>
        <topology evidence="1">Single-pass membrane protein</topology>
    </subcellularLocation>
</comment>
<comment type="similarity">
    <text evidence="1">Belongs to the ATPase B chain family.</text>
</comment>
<organism>
    <name type="scientific">Klebsiella pneumoniae subsp. pneumoniae (strain ATCC 700721 / MGH 78578)</name>
    <dbReference type="NCBI Taxonomy" id="272620"/>
    <lineage>
        <taxon>Bacteria</taxon>
        <taxon>Pseudomonadati</taxon>
        <taxon>Pseudomonadota</taxon>
        <taxon>Gammaproteobacteria</taxon>
        <taxon>Enterobacterales</taxon>
        <taxon>Enterobacteriaceae</taxon>
        <taxon>Klebsiella/Raoultella group</taxon>
        <taxon>Klebsiella</taxon>
        <taxon>Klebsiella pneumoniae complex</taxon>
    </lineage>
</organism>
<reference key="1">
    <citation type="submission" date="2006-09" db="EMBL/GenBank/DDBJ databases">
        <authorList>
            <consortium name="The Klebsiella pneumonia Genome Sequencing Project"/>
            <person name="McClelland M."/>
            <person name="Sanderson E.K."/>
            <person name="Spieth J."/>
            <person name="Clifton W.S."/>
            <person name="Latreille P."/>
            <person name="Sabo A."/>
            <person name="Pepin K."/>
            <person name="Bhonagiri V."/>
            <person name="Porwollik S."/>
            <person name="Ali J."/>
            <person name="Wilson R.K."/>
        </authorList>
    </citation>
    <scope>NUCLEOTIDE SEQUENCE [LARGE SCALE GENOMIC DNA]</scope>
    <source>
        <strain>ATCC 700721 / MGH 78578</strain>
    </source>
</reference>
<feature type="chain" id="PRO_0000368535" description="ATP synthase subunit b">
    <location>
        <begin position="1"/>
        <end position="154"/>
    </location>
</feature>
<feature type="transmembrane region" description="Helical" evidence="1">
    <location>
        <begin position="9"/>
        <end position="29"/>
    </location>
</feature>
<gene>
    <name evidence="1" type="primary">atpF</name>
    <name type="ordered locus">KPN78578_41000</name>
    <name type="ORF">KPN_04141</name>
</gene>
<evidence type="ECO:0000255" key="1">
    <source>
        <dbReference type="HAMAP-Rule" id="MF_01398"/>
    </source>
</evidence>
<name>ATPF_KLEP7</name>
<protein>
    <recommendedName>
        <fullName evidence="1">ATP synthase subunit b</fullName>
    </recommendedName>
    <alternativeName>
        <fullName evidence="1">ATP synthase F(0) sector subunit b</fullName>
    </alternativeName>
    <alternativeName>
        <fullName evidence="1">ATPase subunit I</fullName>
    </alternativeName>
    <alternativeName>
        <fullName evidence="1">F-type ATPase subunit b</fullName>
        <shortName evidence="1">F-ATPase subunit b</shortName>
    </alternativeName>
</protein>
<dbReference type="EMBL" id="CP000647">
    <property type="protein sequence ID" value="ABR79524.1"/>
    <property type="molecule type" value="Genomic_DNA"/>
</dbReference>
<dbReference type="SMR" id="A6TG40"/>
<dbReference type="STRING" id="272620.KPN_04141"/>
<dbReference type="jPOST" id="A6TG40"/>
<dbReference type="PaxDb" id="272620-KPN_04141"/>
<dbReference type="EnsemblBacteria" id="ABR79524">
    <property type="protein sequence ID" value="ABR79524"/>
    <property type="gene ID" value="KPN_04141"/>
</dbReference>
<dbReference type="KEGG" id="kpn:KPN_04141"/>
<dbReference type="HOGENOM" id="CLU_079215_4_5_6"/>
<dbReference type="Proteomes" id="UP000000265">
    <property type="component" value="Chromosome"/>
</dbReference>
<dbReference type="GO" id="GO:0005886">
    <property type="term" value="C:plasma membrane"/>
    <property type="evidence" value="ECO:0007669"/>
    <property type="project" value="UniProtKB-SubCell"/>
</dbReference>
<dbReference type="GO" id="GO:0045259">
    <property type="term" value="C:proton-transporting ATP synthase complex"/>
    <property type="evidence" value="ECO:0007669"/>
    <property type="project" value="UniProtKB-KW"/>
</dbReference>
<dbReference type="GO" id="GO:0046933">
    <property type="term" value="F:proton-transporting ATP synthase activity, rotational mechanism"/>
    <property type="evidence" value="ECO:0007669"/>
    <property type="project" value="UniProtKB-UniRule"/>
</dbReference>
<dbReference type="GO" id="GO:0046961">
    <property type="term" value="F:proton-transporting ATPase activity, rotational mechanism"/>
    <property type="evidence" value="ECO:0007669"/>
    <property type="project" value="TreeGrafter"/>
</dbReference>
<dbReference type="CDD" id="cd06503">
    <property type="entry name" value="ATP-synt_Fo_b"/>
    <property type="match status" value="1"/>
</dbReference>
<dbReference type="FunFam" id="1.20.5.620:FF:000001">
    <property type="entry name" value="ATP synthase subunit b"/>
    <property type="match status" value="1"/>
</dbReference>
<dbReference type="Gene3D" id="1.20.5.620">
    <property type="entry name" value="F1F0 ATP synthase subunit B, membrane domain"/>
    <property type="match status" value="1"/>
</dbReference>
<dbReference type="HAMAP" id="MF_01398">
    <property type="entry name" value="ATP_synth_b_bprime"/>
    <property type="match status" value="1"/>
</dbReference>
<dbReference type="InterPro" id="IPR028987">
    <property type="entry name" value="ATP_synth_B-like_membr_sf"/>
</dbReference>
<dbReference type="InterPro" id="IPR002146">
    <property type="entry name" value="ATP_synth_b/b'su_bac/chlpt"/>
</dbReference>
<dbReference type="InterPro" id="IPR005864">
    <property type="entry name" value="ATP_synth_F0_bsu_bac"/>
</dbReference>
<dbReference type="InterPro" id="IPR050059">
    <property type="entry name" value="ATP_synthase_B_chain"/>
</dbReference>
<dbReference type="NCBIfam" id="TIGR01144">
    <property type="entry name" value="ATP_synt_b"/>
    <property type="match status" value="1"/>
</dbReference>
<dbReference type="NCBIfam" id="NF004411">
    <property type="entry name" value="PRK05759.1-2"/>
    <property type="match status" value="1"/>
</dbReference>
<dbReference type="NCBIfam" id="NF004413">
    <property type="entry name" value="PRK05759.1-4"/>
    <property type="match status" value="1"/>
</dbReference>
<dbReference type="PANTHER" id="PTHR33445:SF1">
    <property type="entry name" value="ATP SYNTHASE SUBUNIT B"/>
    <property type="match status" value="1"/>
</dbReference>
<dbReference type="PANTHER" id="PTHR33445">
    <property type="entry name" value="ATP SYNTHASE SUBUNIT B', CHLOROPLASTIC"/>
    <property type="match status" value="1"/>
</dbReference>
<dbReference type="Pfam" id="PF00430">
    <property type="entry name" value="ATP-synt_B"/>
    <property type="match status" value="1"/>
</dbReference>
<dbReference type="SUPFAM" id="SSF81573">
    <property type="entry name" value="F1F0 ATP synthase subunit B, membrane domain"/>
    <property type="match status" value="1"/>
</dbReference>
<sequence>MNATILGQAIAFVIFVWFCMKYVWPPLMAAIEKRQKEISDGLASAERAKKDLDLAQANATDQLKKAKAEAQVIIEQANKRRSQILDEAKAEAEQERTKIVAQAQAEIDAERKRAREELRKQVAILAVAGAEKIIERSVDEAANSDIVDKLVAEL</sequence>
<keyword id="KW-0066">ATP synthesis</keyword>
<keyword id="KW-0997">Cell inner membrane</keyword>
<keyword id="KW-1003">Cell membrane</keyword>
<keyword id="KW-0138">CF(0)</keyword>
<keyword id="KW-0375">Hydrogen ion transport</keyword>
<keyword id="KW-0406">Ion transport</keyword>
<keyword id="KW-0472">Membrane</keyword>
<keyword id="KW-0812">Transmembrane</keyword>
<keyword id="KW-1133">Transmembrane helix</keyword>
<keyword id="KW-0813">Transport</keyword>
<accession>A6TG40</accession>
<proteinExistence type="inferred from homology"/>